<protein>
    <recommendedName>
        <fullName evidence="1">Sec-independent protein translocase protein TatA</fullName>
    </recommendedName>
</protein>
<sequence>MGGLQPWHWVIVIAVFVLLFGAKKLPDAARSLGKSMRIFKSEIKEMQSEGKSDNPPATPITSERVDTNPTAEQPDKRSA</sequence>
<keyword id="KW-1003">Cell membrane</keyword>
<keyword id="KW-0472">Membrane</keyword>
<keyword id="KW-0653">Protein transport</keyword>
<keyword id="KW-0811">Translocation</keyword>
<keyword id="KW-0812">Transmembrane</keyword>
<keyword id="KW-1133">Transmembrane helix</keyword>
<keyword id="KW-0813">Transport</keyword>
<dbReference type="EMBL" id="CP000384">
    <property type="protein sequence ID" value="ABG08582.1"/>
    <property type="molecule type" value="Genomic_DNA"/>
</dbReference>
<dbReference type="SMR" id="Q1B952"/>
<dbReference type="KEGG" id="mmc:Mmcs_2474"/>
<dbReference type="HOGENOM" id="CLU_086034_4_2_11"/>
<dbReference type="BioCyc" id="MSP164756:G1G6O-2525-MONOMER"/>
<dbReference type="GO" id="GO:0033281">
    <property type="term" value="C:TAT protein transport complex"/>
    <property type="evidence" value="ECO:0007669"/>
    <property type="project" value="UniProtKB-UniRule"/>
</dbReference>
<dbReference type="GO" id="GO:0008320">
    <property type="term" value="F:protein transmembrane transporter activity"/>
    <property type="evidence" value="ECO:0007669"/>
    <property type="project" value="UniProtKB-UniRule"/>
</dbReference>
<dbReference type="GO" id="GO:0043953">
    <property type="term" value="P:protein transport by the Tat complex"/>
    <property type="evidence" value="ECO:0007669"/>
    <property type="project" value="UniProtKB-UniRule"/>
</dbReference>
<dbReference type="Gene3D" id="1.20.5.3310">
    <property type="match status" value="1"/>
</dbReference>
<dbReference type="HAMAP" id="MF_00236">
    <property type="entry name" value="TatA_E"/>
    <property type="match status" value="1"/>
</dbReference>
<dbReference type="InterPro" id="IPR003369">
    <property type="entry name" value="TatA/B/E"/>
</dbReference>
<dbReference type="InterPro" id="IPR006312">
    <property type="entry name" value="TatA/E"/>
</dbReference>
<dbReference type="NCBIfam" id="NF001854">
    <property type="entry name" value="PRK00575.1"/>
    <property type="match status" value="1"/>
</dbReference>
<dbReference type="NCBIfam" id="TIGR01411">
    <property type="entry name" value="tatAE"/>
    <property type="match status" value="1"/>
</dbReference>
<dbReference type="PANTHER" id="PTHR42982">
    <property type="entry name" value="SEC-INDEPENDENT PROTEIN TRANSLOCASE PROTEIN TATA"/>
    <property type="match status" value="1"/>
</dbReference>
<dbReference type="PANTHER" id="PTHR42982:SF8">
    <property type="entry name" value="SEC-INDEPENDENT PROTEIN TRANSLOCASE PROTEIN TATA"/>
    <property type="match status" value="1"/>
</dbReference>
<dbReference type="Pfam" id="PF02416">
    <property type="entry name" value="TatA_B_E"/>
    <property type="match status" value="1"/>
</dbReference>
<name>TATA_MYCSS</name>
<organism>
    <name type="scientific">Mycobacterium sp. (strain MCS)</name>
    <dbReference type="NCBI Taxonomy" id="164756"/>
    <lineage>
        <taxon>Bacteria</taxon>
        <taxon>Bacillati</taxon>
        <taxon>Actinomycetota</taxon>
        <taxon>Actinomycetes</taxon>
        <taxon>Mycobacteriales</taxon>
        <taxon>Mycobacteriaceae</taxon>
        <taxon>Mycobacterium</taxon>
    </lineage>
</organism>
<evidence type="ECO:0000255" key="1">
    <source>
        <dbReference type="HAMAP-Rule" id="MF_00236"/>
    </source>
</evidence>
<evidence type="ECO:0000256" key="2">
    <source>
        <dbReference type="SAM" id="MobiDB-lite"/>
    </source>
</evidence>
<comment type="function">
    <text evidence="1">Part of the twin-arginine translocation (Tat) system that transports large folded proteins containing a characteristic twin-arginine motif in their signal peptide across membranes. TatA could form the protein-conducting channel of the Tat system.</text>
</comment>
<comment type="subunit">
    <text evidence="1">The Tat system comprises two distinct complexes: a TatABC complex, containing multiple copies of TatA, TatB and TatC subunits, and a separate TatA complex, containing only TatA subunits. Substrates initially bind to the TatABC complex, which probably triggers association of the separate TatA complex to form the active translocon.</text>
</comment>
<comment type="subcellular location">
    <subcellularLocation>
        <location evidence="1">Cell membrane</location>
        <topology evidence="1">Single-pass membrane protein</topology>
    </subcellularLocation>
</comment>
<comment type="similarity">
    <text evidence="1">Belongs to the TatA/E family.</text>
</comment>
<feature type="chain" id="PRO_1000044404" description="Sec-independent protein translocase protein TatA">
    <location>
        <begin position="1"/>
        <end position="79"/>
    </location>
</feature>
<feature type="transmembrane region" description="Helical" evidence="1">
    <location>
        <begin position="1"/>
        <end position="21"/>
    </location>
</feature>
<feature type="region of interest" description="Disordered" evidence="2">
    <location>
        <begin position="43"/>
        <end position="79"/>
    </location>
</feature>
<feature type="compositionally biased region" description="Basic and acidic residues" evidence="2">
    <location>
        <begin position="43"/>
        <end position="52"/>
    </location>
</feature>
<proteinExistence type="inferred from homology"/>
<accession>Q1B952</accession>
<reference key="1">
    <citation type="submission" date="2006-06" db="EMBL/GenBank/DDBJ databases">
        <title>Complete sequence of chromosome of Mycobacterium sp. MCS.</title>
        <authorList>
            <consortium name="US DOE Joint Genome Institute"/>
            <person name="Copeland A."/>
            <person name="Lucas S."/>
            <person name="Lapidus A."/>
            <person name="Barry K."/>
            <person name="Detter J.C."/>
            <person name="Glavina del Rio T."/>
            <person name="Hammon N."/>
            <person name="Israni S."/>
            <person name="Dalin E."/>
            <person name="Tice H."/>
            <person name="Pitluck S."/>
            <person name="Martinez M."/>
            <person name="Schmutz J."/>
            <person name="Larimer F."/>
            <person name="Land M."/>
            <person name="Hauser L."/>
            <person name="Kyrpides N."/>
            <person name="Kim E."/>
            <person name="Miller C.D."/>
            <person name="Hughes J.E."/>
            <person name="Anderson A.J."/>
            <person name="Sims R.C."/>
            <person name="Richardson P."/>
        </authorList>
    </citation>
    <scope>NUCLEOTIDE SEQUENCE [LARGE SCALE GENOMIC DNA]</scope>
    <source>
        <strain>MCS</strain>
    </source>
</reference>
<gene>
    <name evidence="1" type="primary">tatA</name>
    <name type="ordered locus">Mmcs_2474</name>
</gene>